<keyword id="KW-0687">Ribonucleoprotein</keyword>
<keyword id="KW-0689">Ribosomal protein</keyword>
<proteinExistence type="inferred from homology"/>
<organism>
    <name type="scientific">Vibrio campbellii (strain ATCC BAA-1116)</name>
    <dbReference type="NCBI Taxonomy" id="2902295"/>
    <lineage>
        <taxon>Bacteria</taxon>
        <taxon>Pseudomonadati</taxon>
        <taxon>Pseudomonadota</taxon>
        <taxon>Gammaproteobacteria</taxon>
        <taxon>Vibrionales</taxon>
        <taxon>Vibrionaceae</taxon>
        <taxon>Vibrio</taxon>
    </lineage>
</organism>
<comment type="similarity">
    <text evidence="1">Belongs to the bacterial ribosomal protein bL35 family.</text>
</comment>
<name>RL35_VIBC1</name>
<evidence type="ECO:0000255" key="1">
    <source>
        <dbReference type="HAMAP-Rule" id="MF_00514"/>
    </source>
</evidence>
<evidence type="ECO:0000305" key="2"/>
<dbReference type="EMBL" id="CP000789">
    <property type="protein sequence ID" value="ABU71046.1"/>
    <property type="molecule type" value="Genomic_DNA"/>
</dbReference>
<dbReference type="RefSeq" id="WP_005428085.1">
    <property type="nucleotide sequence ID" value="NC_022269.1"/>
</dbReference>
<dbReference type="SMR" id="A7N011"/>
<dbReference type="GeneID" id="67377559"/>
<dbReference type="KEGG" id="vha:VIBHAR_02081"/>
<dbReference type="PATRIC" id="fig|338187.25.peg.612"/>
<dbReference type="Proteomes" id="UP000008152">
    <property type="component" value="Chromosome I"/>
</dbReference>
<dbReference type="GO" id="GO:0022625">
    <property type="term" value="C:cytosolic large ribosomal subunit"/>
    <property type="evidence" value="ECO:0007669"/>
    <property type="project" value="TreeGrafter"/>
</dbReference>
<dbReference type="GO" id="GO:0003735">
    <property type="term" value="F:structural constituent of ribosome"/>
    <property type="evidence" value="ECO:0007669"/>
    <property type="project" value="InterPro"/>
</dbReference>
<dbReference type="GO" id="GO:0006412">
    <property type="term" value="P:translation"/>
    <property type="evidence" value="ECO:0007669"/>
    <property type="project" value="UniProtKB-UniRule"/>
</dbReference>
<dbReference type="FunFam" id="4.10.410.60:FF:000001">
    <property type="entry name" value="50S ribosomal protein L35"/>
    <property type="match status" value="1"/>
</dbReference>
<dbReference type="Gene3D" id="4.10.410.60">
    <property type="match status" value="1"/>
</dbReference>
<dbReference type="HAMAP" id="MF_00514">
    <property type="entry name" value="Ribosomal_bL35"/>
    <property type="match status" value="1"/>
</dbReference>
<dbReference type="InterPro" id="IPR001706">
    <property type="entry name" value="Ribosomal_bL35"/>
</dbReference>
<dbReference type="InterPro" id="IPR021137">
    <property type="entry name" value="Ribosomal_bL35-like"/>
</dbReference>
<dbReference type="InterPro" id="IPR018265">
    <property type="entry name" value="Ribosomal_bL35_CS"/>
</dbReference>
<dbReference type="InterPro" id="IPR037229">
    <property type="entry name" value="Ribosomal_bL35_sf"/>
</dbReference>
<dbReference type="NCBIfam" id="TIGR00001">
    <property type="entry name" value="rpmI_bact"/>
    <property type="match status" value="1"/>
</dbReference>
<dbReference type="PANTHER" id="PTHR33343">
    <property type="entry name" value="54S RIBOSOMAL PROTEIN BL35M"/>
    <property type="match status" value="1"/>
</dbReference>
<dbReference type="PANTHER" id="PTHR33343:SF1">
    <property type="entry name" value="LARGE RIBOSOMAL SUBUNIT PROTEIN BL35M"/>
    <property type="match status" value="1"/>
</dbReference>
<dbReference type="Pfam" id="PF01632">
    <property type="entry name" value="Ribosomal_L35p"/>
    <property type="match status" value="1"/>
</dbReference>
<dbReference type="PRINTS" id="PR00064">
    <property type="entry name" value="RIBOSOMALL35"/>
</dbReference>
<dbReference type="SUPFAM" id="SSF143034">
    <property type="entry name" value="L35p-like"/>
    <property type="match status" value="1"/>
</dbReference>
<dbReference type="PROSITE" id="PS00936">
    <property type="entry name" value="RIBOSOMAL_L35"/>
    <property type="match status" value="1"/>
</dbReference>
<accession>A7N011</accession>
<protein>
    <recommendedName>
        <fullName evidence="1">Large ribosomal subunit protein bL35</fullName>
    </recommendedName>
    <alternativeName>
        <fullName evidence="2">50S ribosomal protein L35</fullName>
    </alternativeName>
</protein>
<feature type="chain" id="PRO_1000050789" description="Large ribosomal subunit protein bL35">
    <location>
        <begin position="1"/>
        <end position="64"/>
    </location>
</feature>
<gene>
    <name evidence="1" type="primary">rpmI</name>
    <name type="ordered locus">VIBHAR_02081</name>
</gene>
<sequence>MPKMKTNKGAAKRFKKTAGGIKYKHATKRHILTKRTTKNKRQLRPNALLPRCEVAAVVRMLPYA</sequence>
<reference key="1">
    <citation type="submission" date="2007-08" db="EMBL/GenBank/DDBJ databases">
        <authorList>
            <consortium name="The Vibrio harveyi Genome Sequencing Project"/>
            <person name="Bassler B."/>
            <person name="Clifton S.W."/>
            <person name="Fulton L."/>
            <person name="Delehaunty K."/>
            <person name="Fronick C."/>
            <person name="Harrison M."/>
            <person name="Markivic C."/>
            <person name="Fulton R."/>
            <person name="Tin-Wollam A.-M."/>
            <person name="Shah N."/>
            <person name="Pepin K."/>
            <person name="Nash W."/>
            <person name="Thiruvilangam P."/>
            <person name="Bhonagiri V."/>
            <person name="Waters C."/>
            <person name="Tu K.C."/>
            <person name="Irgon J."/>
            <person name="Wilson R.K."/>
        </authorList>
    </citation>
    <scope>NUCLEOTIDE SEQUENCE [LARGE SCALE GENOMIC DNA]</scope>
    <source>
        <strain>ATCC BAA-1116 / BB120</strain>
    </source>
</reference>